<comment type="function">
    <text evidence="1 2 3">Copper metallothionein that protects the cell against copper toxicity by tightly chelating copper ions (PubMed:21819456, PubMed:23498952). Required for antioxidant-mediated growth rescue in the presence of fluconazole (PubMed:31694529). Acts as a critical factors for lung colonization and virulence (PubMed:23498952).</text>
</comment>
<comment type="subcellular location">
    <subcellularLocation>
        <location evidence="2">Cytoplasm</location>
        <location evidence="2">Cell cortex</location>
    </subcellularLocation>
</comment>
<comment type="induction">
    <text evidence="1 2">Expression is induced in a dose-dependent manner in response to high concentrations of copper and basal transcription is repressed in the presence of the copper chelator bathocuproin sulphonate (BCS) (PubMed:21819456). Expression is regulated by the CUF1 copper-dependent transcription factor (PubMed:21819456). Highly induced during mice pulmonary infection (PubMed:23498952).</text>
</comment>
<comment type="domain">
    <text evidence="2">Divided into 4 Cys-rich domains by 3 spacer sequences termed B1-B3 (PubMed:23498952). Each cystein-rich domain contains the conserved copper-binding motif Cys-X-Cys-X6-Cys-X-Cys-X4-Cys-X-Cys-X2-Cys (PubMed:23498952). The copper-binding domains together are able to chelate up to 16 copper ions (PubMed:23498952).</text>
</comment>
<comment type="disruption phenotype">
    <text evidence="2 3">Fungi lacking both CMT1 and CMT2 show attenuated virulence and reduced pulmonary colonization in mice (PubMed:23498952). Impairs growth rescue by antioxidants when cells are treated with fluconazole (PubMed:31694529).</text>
</comment>
<comment type="similarity">
    <text evidence="6">Belongs to the metallothionein superfamily.</text>
</comment>
<organism>
    <name type="scientific">Cryptococcus neoformans var. grubii serotype A (strain H99 / ATCC 208821 / CBS 10515 / FGSC 9487)</name>
    <name type="common">Filobasidiella neoformans var. grubii</name>
    <dbReference type="NCBI Taxonomy" id="235443"/>
    <lineage>
        <taxon>Eukaryota</taxon>
        <taxon>Fungi</taxon>
        <taxon>Dikarya</taxon>
        <taxon>Basidiomycota</taxon>
        <taxon>Agaricomycotina</taxon>
        <taxon>Tremellomycetes</taxon>
        <taxon>Tremellales</taxon>
        <taxon>Cryptococcaceae</taxon>
        <taxon>Cryptococcus</taxon>
        <taxon>Cryptococcus neoformans species complex</taxon>
    </lineage>
</organism>
<proteinExistence type="evidence at protein level"/>
<sequence length="122" mass="11890">MACNCPPQKNTACCSTSEAQDKCTCQKGNCECKACPNSTKTSESGGKASTCNCGGSGEACTCPPGQCACDKCPKKAKSVSTCGCGGSGAACSCPPGKCACDNCPKQAQEKVSSCACSGSGAA</sequence>
<evidence type="ECO:0000269" key="1">
    <source>
    </source>
</evidence>
<evidence type="ECO:0000269" key="2">
    <source>
    </source>
</evidence>
<evidence type="ECO:0000269" key="3">
    <source>
    </source>
</evidence>
<evidence type="ECO:0000303" key="4">
    <source>
    </source>
</evidence>
<evidence type="ECO:0000303" key="5">
    <source>
    </source>
</evidence>
<evidence type="ECO:0000305" key="6"/>
<evidence type="ECO:0000305" key="7">
    <source>
    </source>
</evidence>
<accession>J9VXB3</accession>
<reference key="1">
    <citation type="journal article" date="2014" name="PLoS Genet.">
        <title>Analysis of the genome and transcriptome of Cryptococcus neoformans var. grubii reveals complex RNA expression and microevolution leading to virulence attenuation.</title>
        <authorList>
            <person name="Janbon G."/>
            <person name="Ormerod K.L."/>
            <person name="Paulet D."/>
            <person name="Byrnes E.J. III"/>
            <person name="Yadav V."/>
            <person name="Chatterjee G."/>
            <person name="Mullapudi N."/>
            <person name="Hon C.-C."/>
            <person name="Billmyre R.B."/>
            <person name="Brunel F."/>
            <person name="Bahn Y.-S."/>
            <person name="Chen W."/>
            <person name="Chen Y."/>
            <person name="Chow E.W.L."/>
            <person name="Coppee J.-Y."/>
            <person name="Floyd-Averette A."/>
            <person name="Gaillardin C."/>
            <person name="Gerik K.J."/>
            <person name="Goldberg J."/>
            <person name="Gonzalez-Hilarion S."/>
            <person name="Gujja S."/>
            <person name="Hamlin J.L."/>
            <person name="Hsueh Y.-P."/>
            <person name="Ianiri G."/>
            <person name="Jones S."/>
            <person name="Kodira C.D."/>
            <person name="Kozubowski L."/>
            <person name="Lam W."/>
            <person name="Marra M."/>
            <person name="Mesner L.D."/>
            <person name="Mieczkowski P.A."/>
            <person name="Moyrand F."/>
            <person name="Nielsen K."/>
            <person name="Proux C."/>
            <person name="Rossignol T."/>
            <person name="Schein J.E."/>
            <person name="Sun S."/>
            <person name="Wollschlaeger C."/>
            <person name="Wood I.A."/>
            <person name="Zeng Q."/>
            <person name="Neuveglise C."/>
            <person name="Newlon C.S."/>
            <person name="Perfect J.R."/>
            <person name="Lodge J.K."/>
            <person name="Idnurm A."/>
            <person name="Stajich J.E."/>
            <person name="Kronstad J.W."/>
            <person name="Sanyal K."/>
            <person name="Heitman J."/>
            <person name="Fraser J.A."/>
            <person name="Cuomo C.A."/>
            <person name="Dietrich F.S."/>
        </authorList>
    </citation>
    <scope>NUCLEOTIDE SEQUENCE [LARGE SCALE GENOMIC DNA]</scope>
    <source>
        <strain>H99 / ATCC 208821 / CBS 10515 / FGSC 9487</strain>
    </source>
</reference>
<reference key="2">
    <citation type="journal article" date="2011" name="Mol. Microbiol.">
        <title>The copper regulon of the human fungal pathogen Cryptococcus neoformans H99.</title>
        <authorList>
            <person name="Ding C."/>
            <person name="Yin J."/>
            <person name="Tovar E.M."/>
            <person name="Fitzpatrick D.A."/>
            <person name="Higgins D.G."/>
            <person name="Thiele D.J."/>
        </authorList>
    </citation>
    <scope>FUNCTION</scope>
    <scope>INDUCTION</scope>
</reference>
<reference key="3">
    <citation type="journal article" date="2013" name="Cell Host Microbe">
        <title>Cryptococcus neoformans copper detoxification machinery is critical for fungal virulence.</title>
        <authorList>
            <person name="Ding C."/>
            <person name="Festa R.A."/>
            <person name="Chen Y.L."/>
            <person name="Espart A."/>
            <person name="Palacios O."/>
            <person name="Espin J."/>
            <person name="Capdevila M."/>
            <person name="Atrian S."/>
            <person name="Heitman J."/>
            <person name="Thiele D.J."/>
        </authorList>
    </citation>
    <scope>FUNCTION</scope>
    <scope>INDUCTION</scope>
    <scope>DISRUPTION PHENOTYPE</scope>
    <scope>DOMAIN</scope>
    <scope>COPPER-BINDING</scope>
    <scope>SUBCELLULAR LOCATION</scope>
</reference>
<reference key="4">
    <citation type="journal article" date="2019" name="BMC Microbiol.">
        <title>Increase of reactive oxygen species contributes to growth inhibition by fluconazole in Cryptococcus neoformans.</title>
        <authorList>
            <person name="Dbouk N.H."/>
            <person name="Covington M.B."/>
            <person name="Nguyen K."/>
            <person name="Chandrasekaran S."/>
        </authorList>
    </citation>
    <scope>FUNCTION</scope>
    <scope>DISRUPTION PHENOTYPE</scope>
</reference>
<feature type="chain" id="PRO_0000449496" description="Copper metallothionein 1">
    <location>
        <begin position="1"/>
        <end position="122"/>
    </location>
</feature>
<feature type="region of interest" description="Cys-rich copper-binding 1" evidence="7">
    <location>
        <begin position="1"/>
        <end position="35"/>
    </location>
</feature>
<feature type="region of interest" description="Spacer B1" evidence="7">
    <location>
        <begin position="36"/>
        <end position="50"/>
    </location>
</feature>
<feature type="region of interest" description="Cys-rich copper-binding 2" evidence="7">
    <location>
        <begin position="51"/>
        <end position="72"/>
    </location>
</feature>
<feature type="region of interest" description="Spacer B2" evidence="7">
    <location>
        <begin position="73"/>
        <end position="81"/>
    </location>
</feature>
<feature type="region of interest" description="Cys-rich copper-binding 3" evidence="7">
    <location>
        <begin position="82"/>
        <end position="103"/>
    </location>
</feature>
<feature type="region of interest" description="Spacer B3" evidence="7">
    <location>
        <begin position="104"/>
        <end position="113"/>
    </location>
</feature>
<feature type="region of interest" description="Cys-rich copper-binding 4" evidence="7">
    <location>
        <begin position="114"/>
        <end position="122"/>
    </location>
</feature>
<keyword id="KW-0186">Copper</keyword>
<keyword id="KW-0963">Cytoplasm</keyword>
<keyword id="KW-0479">Metal-binding</keyword>
<keyword id="KW-0480">Metal-thiolate cluster</keyword>
<keyword id="KW-0677">Repeat</keyword>
<name>CMT1_CRYNH</name>
<gene>
    <name evidence="5" type="primary">CMT1</name>
    <name type="ORF">CNAG_05449</name>
</gene>
<dbReference type="EMBL" id="CP003833">
    <property type="protein sequence ID" value="AFR98878.2"/>
    <property type="molecule type" value="Genomic_DNA"/>
</dbReference>
<dbReference type="RefSeq" id="XP_012053609.1">
    <property type="nucleotide sequence ID" value="XM_012198219.1"/>
</dbReference>
<dbReference type="GeneID" id="23888764"/>
<dbReference type="KEGG" id="cng:CNAG_05449"/>
<dbReference type="VEuPathDB" id="FungiDB:CNAG_05449"/>
<dbReference type="HOGENOM" id="CLU_146153_0_0_1"/>
<dbReference type="OrthoDB" id="6288at5206"/>
<dbReference type="Proteomes" id="UP000010091">
    <property type="component" value="Chromosome 14"/>
</dbReference>
<dbReference type="GO" id="GO:0005938">
    <property type="term" value="C:cell cortex"/>
    <property type="evidence" value="ECO:0007669"/>
    <property type="project" value="UniProtKB-SubCell"/>
</dbReference>
<dbReference type="GO" id="GO:0046872">
    <property type="term" value="F:metal ion binding"/>
    <property type="evidence" value="ECO:0007669"/>
    <property type="project" value="UniProtKB-KW"/>
</dbReference>
<protein>
    <recommendedName>
        <fullName evidence="4">Copper metallothionein 1</fullName>
        <shortName evidence="4">Cu-MT 1</shortName>
        <shortName evidence="4">Cu-metallothionein 1</shortName>
    </recommendedName>
    <alternativeName>
        <fullName evidence="6">Copper chelatin 1</fullName>
    </alternativeName>
    <alternativeName>
        <fullName evidence="6">Copper thionein 1</fullName>
    </alternativeName>
</protein>